<keyword id="KW-1185">Reference proteome</keyword>
<keyword id="KW-0687">Ribonucleoprotein</keyword>
<keyword id="KW-0689">Ribosomal protein</keyword>
<protein>
    <recommendedName>
        <fullName evidence="1">Small ribosomal subunit protein uS15</fullName>
    </recommendedName>
    <alternativeName>
        <fullName evidence="3">30S ribosomal protein S15</fullName>
    </alternativeName>
</protein>
<dbReference type="EMBL" id="BX950229">
    <property type="protein sequence ID" value="CAF31135.1"/>
    <property type="molecule type" value="Genomic_DNA"/>
</dbReference>
<dbReference type="RefSeq" id="WP_011171523.1">
    <property type="nucleotide sequence ID" value="NC_005791.1"/>
</dbReference>
<dbReference type="SMR" id="Q6LWX5"/>
<dbReference type="STRING" id="267377.MMP1579"/>
<dbReference type="EnsemblBacteria" id="CAF31135">
    <property type="protein sequence ID" value="CAF31135"/>
    <property type="gene ID" value="MMP1579"/>
</dbReference>
<dbReference type="KEGG" id="mmp:MMP1579"/>
<dbReference type="PATRIC" id="fig|267377.15.peg.1617"/>
<dbReference type="eggNOG" id="arCOG04185">
    <property type="taxonomic scope" value="Archaea"/>
</dbReference>
<dbReference type="HOGENOM" id="CLU_090139_2_0_2"/>
<dbReference type="OrthoDB" id="6533at2157"/>
<dbReference type="Proteomes" id="UP000000590">
    <property type="component" value="Chromosome"/>
</dbReference>
<dbReference type="GO" id="GO:0022627">
    <property type="term" value="C:cytosolic small ribosomal subunit"/>
    <property type="evidence" value="ECO:0007669"/>
    <property type="project" value="TreeGrafter"/>
</dbReference>
<dbReference type="GO" id="GO:0070181">
    <property type="term" value="F:small ribosomal subunit rRNA binding"/>
    <property type="evidence" value="ECO:0007669"/>
    <property type="project" value="TreeGrafter"/>
</dbReference>
<dbReference type="GO" id="GO:0003735">
    <property type="term" value="F:structural constituent of ribosome"/>
    <property type="evidence" value="ECO:0007669"/>
    <property type="project" value="InterPro"/>
</dbReference>
<dbReference type="GO" id="GO:0006412">
    <property type="term" value="P:translation"/>
    <property type="evidence" value="ECO:0007669"/>
    <property type="project" value="UniProtKB-UniRule"/>
</dbReference>
<dbReference type="CDD" id="cd00353">
    <property type="entry name" value="Ribosomal_S15p_S13e"/>
    <property type="match status" value="1"/>
</dbReference>
<dbReference type="FunFam" id="1.10.287.10:FF:000003">
    <property type="entry name" value="40S ribosomal protein S13"/>
    <property type="match status" value="1"/>
</dbReference>
<dbReference type="Gene3D" id="4.10.860.130">
    <property type="match status" value="1"/>
</dbReference>
<dbReference type="Gene3D" id="1.10.287.10">
    <property type="entry name" value="S15/NS1, RNA-binding"/>
    <property type="match status" value="1"/>
</dbReference>
<dbReference type="HAMAP" id="MF_01343_A">
    <property type="entry name" value="Ribosomal_uS15_A"/>
    <property type="match status" value="1"/>
</dbReference>
<dbReference type="InterPro" id="IPR000589">
    <property type="entry name" value="Ribosomal_uS15"/>
</dbReference>
<dbReference type="InterPro" id="IPR023029">
    <property type="entry name" value="Ribosomal_uS15_arc_euk"/>
</dbReference>
<dbReference type="InterPro" id="IPR012606">
    <property type="entry name" value="Ribosomal_uS15_N"/>
</dbReference>
<dbReference type="InterPro" id="IPR009068">
    <property type="entry name" value="uS15_NS1_RNA-bd_sf"/>
</dbReference>
<dbReference type="NCBIfam" id="NF006331">
    <property type="entry name" value="PRK08561.1"/>
    <property type="match status" value="1"/>
</dbReference>
<dbReference type="PANTHER" id="PTHR11885">
    <property type="entry name" value="RIBOSOMAL PROTEIN S15P/S13E"/>
    <property type="match status" value="1"/>
</dbReference>
<dbReference type="PANTHER" id="PTHR11885:SF6">
    <property type="entry name" value="SMALL RIBOSOMAL SUBUNIT PROTEIN US15"/>
    <property type="match status" value="1"/>
</dbReference>
<dbReference type="Pfam" id="PF08069">
    <property type="entry name" value="Ribosomal_S13_N"/>
    <property type="match status" value="1"/>
</dbReference>
<dbReference type="Pfam" id="PF00312">
    <property type="entry name" value="Ribosomal_S15"/>
    <property type="match status" value="1"/>
</dbReference>
<dbReference type="SMART" id="SM01386">
    <property type="entry name" value="Ribosomal_S13_N"/>
    <property type="match status" value="1"/>
</dbReference>
<dbReference type="SMART" id="SM01387">
    <property type="entry name" value="Ribosomal_S15"/>
    <property type="match status" value="1"/>
</dbReference>
<dbReference type="SUPFAM" id="SSF47060">
    <property type="entry name" value="S15/NS1 RNA-binding domain"/>
    <property type="match status" value="1"/>
</dbReference>
<dbReference type="PROSITE" id="PS00362">
    <property type="entry name" value="RIBOSOMAL_S15"/>
    <property type="match status" value="1"/>
</dbReference>
<gene>
    <name evidence="1" type="primary">rps15</name>
    <name type="ordered locus">MMP1579</name>
</gene>
<organism>
    <name type="scientific">Methanococcus maripaludis (strain DSM 14266 / JCM 13030 / NBRC 101832 / S2 / LL)</name>
    <dbReference type="NCBI Taxonomy" id="267377"/>
    <lineage>
        <taxon>Archaea</taxon>
        <taxon>Methanobacteriati</taxon>
        <taxon>Methanobacteriota</taxon>
        <taxon>Methanomada group</taxon>
        <taxon>Methanococci</taxon>
        <taxon>Methanococcales</taxon>
        <taxon>Methanococcaceae</taxon>
        <taxon>Methanococcus</taxon>
    </lineage>
</organism>
<proteinExistence type="inferred from homology"/>
<name>RS15_METMP</name>
<accession>Q6LWX5</accession>
<feature type="chain" id="PRO_0000115607" description="Small ribosomal subunit protein uS15">
    <location>
        <begin position="1"/>
        <end position="151"/>
    </location>
</feature>
<feature type="region of interest" description="Disordered" evidence="2">
    <location>
        <begin position="1"/>
        <end position="20"/>
    </location>
</feature>
<evidence type="ECO:0000255" key="1">
    <source>
        <dbReference type="HAMAP-Rule" id="MF_01343"/>
    </source>
</evidence>
<evidence type="ECO:0000256" key="2">
    <source>
        <dbReference type="SAM" id="MobiDB-lite"/>
    </source>
</evidence>
<evidence type="ECO:0000305" key="3"/>
<sequence>MARLHSGKRGSSGSTRPLRTEVPEWVSMSAEDIEAKIVEMAKDGKQSAIIGNILRDMYGVPNVKLITGKSVSSIMKEAGFYAEVPEDLFNLMKKAINLRNHLENNPRDTHSTVGLKLIESKIRRLVKYYRGTKVLPAKWRYSPETARLLVE</sequence>
<reference key="1">
    <citation type="journal article" date="2004" name="J. Bacteriol.">
        <title>Complete genome sequence of the genetically tractable hydrogenotrophic methanogen Methanococcus maripaludis.</title>
        <authorList>
            <person name="Hendrickson E.L."/>
            <person name="Kaul R."/>
            <person name="Zhou Y."/>
            <person name="Bovee D."/>
            <person name="Chapman P."/>
            <person name="Chung J."/>
            <person name="Conway de Macario E."/>
            <person name="Dodsworth J.A."/>
            <person name="Gillett W."/>
            <person name="Graham D.E."/>
            <person name="Hackett M."/>
            <person name="Haydock A.K."/>
            <person name="Kang A."/>
            <person name="Land M.L."/>
            <person name="Levy R."/>
            <person name="Lie T.J."/>
            <person name="Major T.A."/>
            <person name="Moore B.C."/>
            <person name="Porat I."/>
            <person name="Palmeiri A."/>
            <person name="Rouse G."/>
            <person name="Saenphimmachak C."/>
            <person name="Soell D."/>
            <person name="Van Dien S."/>
            <person name="Wang T."/>
            <person name="Whitman W.B."/>
            <person name="Xia Q."/>
            <person name="Zhang Y."/>
            <person name="Larimer F.W."/>
            <person name="Olson M.V."/>
            <person name="Leigh J.A."/>
        </authorList>
    </citation>
    <scope>NUCLEOTIDE SEQUENCE [LARGE SCALE GENOMIC DNA]</scope>
    <source>
        <strain>DSM 14266 / JCM 13030 / NBRC 101832 / S2 / LL</strain>
    </source>
</reference>
<comment type="subunit">
    <text evidence="1">Part of the 30S ribosomal subunit.</text>
</comment>
<comment type="similarity">
    <text evidence="1">Belongs to the universal ribosomal protein uS15 family.</text>
</comment>